<keyword id="KW-0378">Hydrolase</keyword>
<keyword id="KW-0479">Metal-binding</keyword>
<keyword id="KW-0862">Zinc</keyword>
<comment type="function">
    <text evidence="1">Thiolesterase that catalyzes the hydrolysis of S-D-lactoyl-glutathione to form glutathione and D-lactic acid.</text>
</comment>
<comment type="catalytic activity">
    <reaction evidence="1">
        <text>an S-(2-hydroxyacyl)glutathione + H2O = a 2-hydroxy carboxylate + glutathione + H(+)</text>
        <dbReference type="Rhea" id="RHEA:21864"/>
        <dbReference type="ChEBI" id="CHEBI:15377"/>
        <dbReference type="ChEBI" id="CHEBI:15378"/>
        <dbReference type="ChEBI" id="CHEBI:57925"/>
        <dbReference type="ChEBI" id="CHEBI:58896"/>
        <dbReference type="ChEBI" id="CHEBI:71261"/>
        <dbReference type="EC" id="3.1.2.6"/>
    </reaction>
</comment>
<comment type="cofactor">
    <cofactor evidence="1">
        <name>Zn(2+)</name>
        <dbReference type="ChEBI" id="CHEBI:29105"/>
    </cofactor>
    <text evidence="1">Binds 2 Zn(2+) ions per subunit.</text>
</comment>
<comment type="pathway">
    <text evidence="1">Secondary metabolite metabolism; methylglyoxal degradation; (R)-lactate from methylglyoxal: step 2/2.</text>
</comment>
<comment type="subunit">
    <text evidence="1">Monomer.</text>
</comment>
<comment type="similarity">
    <text evidence="1">Belongs to the metallo-beta-lactamase superfamily. Glyoxalase II family.</text>
</comment>
<accession>Q13F06</accession>
<proteinExistence type="inferred from homology"/>
<protein>
    <recommendedName>
        <fullName evidence="1">Hydroxyacylglutathione hydrolase</fullName>
        <ecNumber evidence="1">3.1.2.6</ecNumber>
    </recommendedName>
    <alternativeName>
        <fullName evidence="1">Glyoxalase II</fullName>
        <shortName evidence="1">Glx II</shortName>
    </alternativeName>
</protein>
<feature type="chain" id="PRO_0000309696" description="Hydroxyacylglutathione hydrolase">
    <location>
        <begin position="1"/>
        <end position="255"/>
    </location>
</feature>
<feature type="binding site" evidence="1">
    <location>
        <position position="56"/>
    </location>
    <ligand>
        <name>Zn(2+)</name>
        <dbReference type="ChEBI" id="CHEBI:29105"/>
        <label>1</label>
    </ligand>
</feature>
<feature type="binding site" evidence="1">
    <location>
        <position position="58"/>
    </location>
    <ligand>
        <name>Zn(2+)</name>
        <dbReference type="ChEBI" id="CHEBI:29105"/>
        <label>1</label>
    </ligand>
</feature>
<feature type="binding site" evidence="1">
    <location>
        <position position="60"/>
    </location>
    <ligand>
        <name>Zn(2+)</name>
        <dbReference type="ChEBI" id="CHEBI:29105"/>
        <label>2</label>
    </ligand>
</feature>
<feature type="binding site" evidence="1">
    <location>
        <position position="61"/>
    </location>
    <ligand>
        <name>Zn(2+)</name>
        <dbReference type="ChEBI" id="CHEBI:29105"/>
        <label>2</label>
    </ligand>
</feature>
<feature type="binding site" evidence="1">
    <location>
        <position position="114"/>
    </location>
    <ligand>
        <name>Zn(2+)</name>
        <dbReference type="ChEBI" id="CHEBI:29105"/>
        <label>1</label>
    </ligand>
</feature>
<feature type="binding site" evidence="1">
    <location>
        <position position="133"/>
    </location>
    <ligand>
        <name>Zn(2+)</name>
        <dbReference type="ChEBI" id="CHEBI:29105"/>
        <label>1</label>
    </ligand>
</feature>
<feature type="binding site" evidence="1">
    <location>
        <position position="133"/>
    </location>
    <ligand>
        <name>Zn(2+)</name>
        <dbReference type="ChEBI" id="CHEBI:29105"/>
        <label>2</label>
    </ligand>
</feature>
<feature type="binding site" evidence="1">
    <location>
        <position position="171"/>
    </location>
    <ligand>
        <name>Zn(2+)</name>
        <dbReference type="ChEBI" id="CHEBI:29105"/>
        <label>2</label>
    </ligand>
</feature>
<dbReference type="EC" id="3.1.2.6" evidence="1"/>
<dbReference type="EMBL" id="CP000283">
    <property type="protein sequence ID" value="ABE37333.1"/>
    <property type="molecule type" value="Genomic_DNA"/>
</dbReference>
<dbReference type="SMR" id="Q13F06"/>
<dbReference type="STRING" id="316057.RPD_0093"/>
<dbReference type="KEGG" id="rpd:RPD_0093"/>
<dbReference type="eggNOG" id="COG0491">
    <property type="taxonomic scope" value="Bacteria"/>
</dbReference>
<dbReference type="HOGENOM" id="CLU_030571_4_1_5"/>
<dbReference type="BioCyc" id="RPAL316057:RPD_RS00465-MONOMER"/>
<dbReference type="UniPathway" id="UPA00619">
    <property type="reaction ID" value="UER00676"/>
</dbReference>
<dbReference type="Proteomes" id="UP000001818">
    <property type="component" value="Chromosome"/>
</dbReference>
<dbReference type="GO" id="GO:0004416">
    <property type="term" value="F:hydroxyacylglutathione hydrolase activity"/>
    <property type="evidence" value="ECO:0007669"/>
    <property type="project" value="UniProtKB-UniRule"/>
</dbReference>
<dbReference type="GO" id="GO:0046872">
    <property type="term" value="F:metal ion binding"/>
    <property type="evidence" value="ECO:0007669"/>
    <property type="project" value="UniProtKB-KW"/>
</dbReference>
<dbReference type="GO" id="GO:0019243">
    <property type="term" value="P:methylglyoxal catabolic process to D-lactate via S-lactoyl-glutathione"/>
    <property type="evidence" value="ECO:0007669"/>
    <property type="project" value="InterPro"/>
</dbReference>
<dbReference type="CDD" id="cd07723">
    <property type="entry name" value="hydroxyacylglutathione_hydrolase_MBL-fold"/>
    <property type="match status" value="1"/>
</dbReference>
<dbReference type="Gene3D" id="3.60.15.10">
    <property type="entry name" value="Ribonuclease Z/Hydroxyacylglutathione hydrolase-like"/>
    <property type="match status" value="1"/>
</dbReference>
<dbReference type="HAMAP" id="MF_01374">
    <property type="entry name" value="Glyoxalase_2"/>
    <property type="match status" value="1"/>
</dbReference>
<dbReference type="InterPro" id="IPR035680">
    <property type="entry name" value="Clx_II_MBL"/>
</dbReference>
<dbReference type="InterPro" id="IPR050110">
    <property type="entry name" value="Glyoxalase_II_hydrolase"/>
</dbReference>
<dbReference type="InterPro" id="IPR032282">
    <property type="entry name" value="HAGH_C"/>
</dbReference>
<dbReference type="InterPro" id="IPR017782">
    <property type="entry name" value="Hydroxyacylglutathione_Hdrlase"/>
</dbReference>
<dbReference type="InterPro" id="IPR001279">
    <property type="entry name" value="Metallo-B-lactamas"/>
</dbReference>
<dbReference type="InterPro" id="IPR036866">
    <property type="entry name" value="RibonucZ/Hydroxyglut_hydro"/>
</dbReference>
<dbReference type="NCBIfam" id="TIGR03413">
    <property type="entry name" value="GSH_gloB"/>
    <property type="match status" value="1"/>
</dbReference>
<dbReference type="PANTHER" id="PTHR43705">
    <property type="entry name" value="HYDROXYACYLGLUTATHIONE HYDROLASE"/>
    <property type="match status" value="1"/>
</dbReference>
<dbReference type="PANTHER" id="PTHR43705:SF1">
    <property type="entry name" value="HYDROXYACYLGLUTATHIONE HYDROLASE GLOB"/>
    <property type="match status" value="1"/>
</dbReference>
<dbReference type="Pfam" id="PF16123">
    <property type="entry name" value="HAGH_C"/>
    <property type="match status" value="1"/>
</dbReference>
<dbReference type="Pfam" id="PF00753">
    <property type="entry name" value="Lactamase_B"/>
    <property type="match status" value="1"/>
</dbReference>
<dbReference type="PIRSF" id="PIRSF005457">
    <property type="entry name" value="Glx"/>
    <property type="match status" value="1"/>
</dbReference>
<dbReference type="SMART" id="SM00849">
    <property type="entry name" value="Lactamase_B"/>
    <property type="match status" value="1"/>
</dbReference>
<dbReference type="SUPFAM" id="SSF56281">
    <property type="entry name" value="Metallo-hydrolase/oxidoreductase"/>
    <property type="match status" value="1"/>
</dbReference>
<reference key="1">
    <citation type="submission" date="2006-03" db="EMBL/GenBank/DDBJ databases">
        <title>Complete sequence of Rhodopseudomonas palustris BisB5.</title>
        <authorList>
            <consortium name="US DOE Joint Genome Institute"/>
            <person name="Copeland A."/>
            <person name="Lucas S."/>
            <person name="Lapidus A."/>
            <person name="Barry K."/>
            <person name="Detter J.C."/>
            <person name="Glavina del Rio T."/>
            <person name="Hammon N."/>
            <person name="Israni S."/>
            <person name="Dalin E."/>
            <person name="Tice H."/>
            <person name="Pitluck S."/>
            <person name="Chain P."/>
            <person name="Malfatti S."/>
            <person name="Shin M."/>
            <person name="Vergez L."/>
            <person name="Schmutz J."/>
            <person name="Larimer F."/>
            <person name="Land M."/>
            <person name="Hauser L."/>
            <person name="Pelletier D.A."/>
            <person name="Kyrpides N."/>
            <person name="Lykidis A."/>
            <person name="Oda Y."/>
            <person name="Harwood C.S."/>
            <person name="Richardson P."/>
        </authorList>
    </citation>
    <scope>NUCLEOTIDE SEQUENCE [LARGE SCALE GENOMIC DNA]</scope>
    <source>
        <strain>BisB5</strain>
    </source>
</reference>
<organism>
    <name type="scientific">Rhodopseudomonas palustris (strain BisB5)</name>
    <dbReference type="NCBI Taxonomy" id="316057"/>
    <lineage>
        <taxon>Bacteria</taxon>
        <taxon>Pseudomonadati</taxon>
        <taxon>Pseudomonadota</taxon>
        <taxon>Alphaproteobacteria</taxon>
        <taxon>Hyphomicrobiales</taxon>
        <taxon>Nitrobacteraceae</taxon>
        <taxon>Rhodopseudomonas</taxon>
    </lineage>
</organism>
<evidence type="ECO:0000255" key="1">
    <source>
        <dbReference type="HAMAP-Rule" id="MF_01374"/>
    </source>
</evidence>
<gene>
    <name evidence="1" type="primary">gloB</name>
    <name type="ordered locus">RPD_0093</name>
</gene>
<sequence length="255" mass="27657">MAADIRIVPCLTDNFGYLIHDPSSGATASIDAPEAAPLIAALEKEGWKLTDILVTHHHGDHVGGVAELKKKYQCRVVAPHDANAKIADIDLRVEEGDVVRVGGLSARVLETPGHTLDHISYVFDDDRALFAADTLFSIGCGRVFEGTYPMMWESLLKLRELPDDFKLYCGHEYTASNVKFALTIEPDNAALQARAKQVEQQRAAGQPTIPVTLGEEKQANLFLRADVPSVAAAVGLPGESAADVFGELRERKNNS</sequence>
<name>GLO2_RHOPS</name>